<proteinExistence type="evidence at protein level"/>
<gene>
    <name type="ORF">AN2882</name>
</gene>
<comment type="function">
    <text evidence="3">Catalyzes the conversion of L-aspartate-beta-semialdehyde (L-Asa) to L-homoserine (L-Hse), the third step in the biosynthesis of amino acids that derive from aspartate (the aspartate family of amino acids), including methioinine and threonine, the latter of which is a precursor to isoleucine; production of homoserine leads to a branch-point in the pathway as it can either be O-phosphorylated for processing to threonine, or O-acylated for processing to methionine.</text>
</comment>
<comment type="catalytic activity">
    <reaction evidence="3">
        <text>L-homoserine + NADP(+) = L-aspartate 4-semialdehyde + NADPH + H(+)</text>
        <dbReference type="Rhea" id="RHEA:15761"/>
        <dbReference type="ChEBI" id="CHEBI:15378"/>
        <dbReference type="ChEBI" id="CHEBI:57476"/>
        <dbReference type="ChEBI" id="CHEBI:57783"/>
        <dbReference type="ChEBI" id="CHEBI:58349"/>
        <dbReference type="ChEBI" id="CHEBI:537519"/>
        <dbReference type="EC" id="1.1.1.3"/>
    </reaction>
    <physiologicalReaction direction="right-to-left" evidence="3">
        <dbReference type="Rhea" id="RHEA:15763"/>
    </physiologicalReaction>
</comment>
<comment type="catalytic activity">
    <reaction evidence="3">
        <text>L-homoserine + NAD(+) = L-aspartate 4-semialdehyde + NADH + H(+)</text>
        <dbReference type="Rhea" id="RHEA:15757"/>
        <dbReference type="ChEBI" id="CHEBI:15378"/>
        <dbReference type="ChEBI" id="CHEBI:57476"/>
        <dbReference type="ChEBI" id="CHEBI:57540"/>
        <dbReference type="ChEBI" id="CHEBI:57945"/>
        <dbReference type="ChEBI" id="CHEBI:537519"/>
        <dbReference type="EC" id="1.1.1.3"/>
    </reaction>
    <physiologicalReaction direction="right-to-left" evidence="3">
        <dbReference type="Rhea" id="RHEA:15759"/>
    </physiologicalReaction>
</comment>
<comment type="cofactor">
    <cofactor evidence="3">
        <name>a metal cation</name>
        <dbReference type="ChEBI" id="CHEBI:25213"/>
    </cofactor>
    <text evidence="3">A sodium ion is seen in the structure; a metal ion may subtly affect the relative position of the nucleotide-binding region to influence enzyme activity, and could increase the stability of the enzyme.</text>
</comment>
<comment type="pathway">
    <text evidence="3">Amino-acid biosynthesis; L-methionine biosynthesis via de novo pathway; L-homoserine from L-aspartate: step 3/3.</text>
</comment>
<comment type="pathway">
    <text evidence="3">Amino-acid biosynthesis; L-threonine biosynthesis; L-threonine from L-aspartate: step 3/5.</text>
</comment>
<comment type="induction">
    <text evidence="5">Down-regulated when grown with elevated levels of potassium chloride.</text>
</comment>
<comment type="similarity">
    <text evidence="6">Belongs to the homoserine dehydrogenase family.</text>
</comment>
<dbReference type="EC" id="1.1.1.3" evidence="3"/>
<dbReference type="EMBL" id="AACD01000051">
    <property type="protein sequence ID" value="EAA63453.1"/>
    <property type="molecule type" value="Genomic_DNA"/>
</dbReference>
<dbReference type="EMBL" id="BN001306">
    <property type="protein sequence ID" value="CBF83817.1"/>
    <property type="molecule type" value="Genomic_DNA"/>
</dbReference>
<dbReference type="RefSeq" id="XP_660486.1">
    <property type="nucleotide sequence ID" value="XM_655394.1"/>
</dbReference>
<dbReference type="SMR" id="Q5B998"/>
<dbReference type="FunCoup" id="Q5B998">
    <property type="interactions" value="351"/>
</dbReference>
<dbReference type="STRING" id="227321.Q5B998"/>
<dbReference type="EnsemblFungi" id="CBF83817">
    <property type="protein sequence ID" value="CBF83817"/>
    <property type="gene ID" value="ANIA_02882"/>
</dbReference>
<dbReference type="KEGG" id="ani:ANIA_02882"/>
<dbReference type="VEuPathDB" id="FungiDB:AN2882"/>
<dbReference type="eggNOG" id="KOG0455">
    <property type="taxonomic scope" value="Eukaryota"/>
</dbReference>
<dbReference type="HOGENOM" id="CLU_009116_0_1_1"/>
<dbReference type="InParanoid" id="Q5B998"/>
<dbReference type="OMA" id="IYTRCYS"/>
<dbReference type="OrthoDB" id="67851at2759"/>
<dbReference type="UniPathway" id="UPA00050">
    <property type="reaction ID" value="UER00063"/>
</dbReference>
<dbReference type="UniPathway" id="UPA00051">
    <property type="reaction ID" value="UER00465"/>
</dbReference>
<dbReference type="Proteomes" id="UP000000560">
    <property type="component" value="Chromosome VI"/>
</dbReference>
<dbReference type="GO" id="GO:0004412">
    <property type="term" value="F:homoserine dehydrogenase activity"/>
    <property type="evidence" value="ECO:0000250"/>
    <property type="project" value="UniProtKB"/>
</dbReference>
<dbReference type="GO" id="GO:0046872">
    <property type="term" value="F:metal ion binding"/>
    <property type="evidence" value="ECO:0007669"/>
    <property type="project" value="UniProtKB-KW"/>
</dbReference>
<dbReference type="GO" id="GO:0070403">
    <property type="term" value="F:NAD+ binding"/>
    <property type="evidence" value="ECO:0000250"/>
    <property type="project" value="UniProtKB"/>
</dbReference>
<dbReference type="GO" id="GO:0050661">
    <property type="term" value="F:NADP binding"/>
    <property type="evidence" value="ECO:0007669"/>
    <property type="project" value="InterPro"/>
</dbReference>
<dbReference type="GO" id="GO:0009067">
    <property type="term" value="P:aspartate family amino acid biosynthetic process"/>
    <property type="evidence" value="ECO:0000318"/>
    <property type="project" value="GO_Central"/>
</dbReference>
<dbReference type="GO" id="GO:0071470">
    <property type="term" value="P:cellular response to osmotic stress"/>
    <property type="evidence" value="ECO:0000270"/>
    <property type="project" value="AspGD"/>
</dbReference>
<dbReference type="GO" id="GO:0009090">
    <property type="term" value="P:homoserine biosynthetic process"/>
    <property type="evidence" value="ECO:0000318"/>
    <property type="project" value="GO_Central"/>
</dbReference>
<dbReference type="GO" id="GO:0009086">
    <property type="term" value="P:methionine biosynthetic process"/>
    <property type="evidence" value="ECO:0000250"/>
    <property type="project" value="UniProtKB"/>
</dbReference>
<dbReference type="GO" id="GO:0009088">
    <property type="term" value="P:threonine biosynthetic process"/>
    <property type="evidence" value="ECO:0000250"/>
    <property type="project" value="UniProtKB"/>
</dbReference>
<dbReference type="FunFam" id="3.30.360.10:FF:000006">
    <property type="entry name" value="Bifunctional aspartokinase/homoserine dehydrogenase"/>
    <property type="match status" value="1"/>
</dbReference>
<dbReference type="Gene3D" id="3.30.360.10">
    <property type="entry name" value="Dihydrodipicolinate Reductase, domain 2"/>
    <property type="match status" value="1"/>
</dbReference>
<dbReference type="Gene3D" id="3.40.50.720">
    <property type="entry name" value="NAD(P)-binding Rossmann-like Domain"/>
    <property type="match status" value="1"/>
</dbReference>
<dbReference type="InterPro" id="IPR005106">
    <property type="entry name" value="Asp/hSer_DH_NAD-bd"/>
</dbReference>
<dbReference type="InterPro" id="IPR011147">
    <property type="entry name" value="Bifunc_Aspkin/hSer_DH"/>
</dbReference>
<dbReference type="InterPro" id="IPR001342">
    <property type="entry name" value="HDH_cat"/>
</dbReference>
<dbReference type="InterPro" id="IPR019811">
    <property type="entry name" value="HDH_CS"/>
</dbReference>
<dbReference type="InterPro" id="IPR022697">
    <property type="entry name" value="HDH_short"/>
</dbReference>
<dbReference type="InterPro" id="IPR036291">
    <property type="entry name" value="NAD(P)-bd_dom_sf"/>
</dbReference>
<dbReference type="PANTHER" id="PTHR43070">
    <property type="match status" value="1"/>
</dbReference>
<dbReference type="PANTHER" id="PTHR43070:SF5">
    <property type="entry name" value="HOMOSERINE DEHYDROGENASE"/>
    <property type="match status" value="1"/>
</dbReference>
<dbReference type="Pfam" id="PF00742">
    <property type="entry name" value="Homoserine_dh"/>
    <property type="match status" value="1"/>
</dbReference>
<dbReference type="Pfam" id="PF03447">
    <property type="entry name" value="NAD_binding_3"/>
    <property type="match status" value="1"/>
</dbReference>
<dbReference type="PIRSF" id="PIRSF036497">
    <property type="entry name" value="HDH_short"/>
    <property type="match status" value="1"/>
</dbReference>
<dbReference type="SUPFAM" id="SSF55347">
    <property type="entry name" value="Glyceraldehyde-3-phosphate dehydrogenase-like, C-terminal domain"/>
    <property type="match status" value="1"/>
</dbReference>
<dbReference type="SUPFAM" id="SSF51735">
    <property type="entry name" value="NAD(P)-binding Rossmann-fold domains"/>
    <property type="match status" value="1"/>
</dbReference>
<dbReference type="PROSITE" id="PS01042">
    <property type="entry name" value="HOMOSER_DHGENASE"/>
    <property type="match status" value="1"/>
</dbReference>
<protein>
    <recommendedName>
        <fullName>Homoserine dehydrogenase</fullName>
        <shortName>HDH</shortName>
        <shortName evidence="3">HSD</shortName>
        <ecNumber evidence="3">1.1.1.3</ecNumber>
    </recommendedName>
</protein>
<organism>
    <name type="scientific">Emericella nidulans (strain FGSC A4 / ATCC 38163 / CBS 112.46 / NRRL 194 / M139)</name>
    <name type="common">Aspergillus nidulans</name>
    <dbReference type="NCBI Taxonomy" id="227321"/>
    <lineage>
        <taxon>Eukaryota</taxon>
        <taxon>Fungi</taxon>
        <taxon>Dikarya</taxon>
        <taxon>Ascomycota</taxon>
        <taxon>Pezizomycotina</taxon>
        <taxon>Eurotiomycetes</taxon>
        <taxon>Eurotiomycetidae</taxon>
        <taxon>Eurotiales</taxon>
        <taxon>Aspergillaceae</taxon>
        <taxon>Aspergillus</taxon>
        <taxon>Aspergillus subgen. Nidulantes</taxon>
    </lineage>
</organism>
<sequence>MSAPIYLGVIGVGGVGTAFLNQLARLPNAPKLILLARSSQTLLSPTPSYSPTIPAAEWKTAVETPSLTKSGALTPDEIATYLASAPGRSILVDNTSDPALASNYPVFLRKGISVVTPNKKGFSSDLSLWKEIFAAAAEGKALVYHESTVGAGLPVISTLKDLVNTGDEVTRIEGVFSGTLSFLFNTFAPASGSSSAKWSEVVSQAKELGYTEPDPRDDLNGMDVARKLTILARIAGLDVQSPDSFPIESLIPAELTSLPSSADGIAQFMARLPEFDSQMAAIKEGAEKAGKVVRYVGSVDVAKKEVRVGLQQFDKDSAIAGLKGSDNIISFYTRRYGSNPLIVQGAGAGGDVTAMGVTADLLKVIERL</sequence>
<feature type="chain" id="PRO_0000348284" description="Homoserine dehydrogenase">
    <location>
        <begin position="1"/>
        <end position="368"/>
    </location>
</feature>
<feature type="active site" description="Proton donor" evidence="4">
    <location>
        <position position="227"/>
    </location>
</feature>
<feature type="binding site" evidence="3">
    <location>
        <position position="12"/>
    </location>
    <ligand>
        <name>NAD(+)</name>
        <dbReference type="ChEBI" id="CHEBI:57540"/>
    </ligand>
</feature>
<feature type="binding site" evidence="3">
    <location>
        <position position="14"/>
    </location>
    <ligand>
        <name>NAD(+)</name>
        <dbReference type="ChEBI" id="CHEBI:57540"/>
    </ligand>
</feature>
<feature type="binding site" evidence="3">
    <location>
        <position position="15"/>
    </location>
    <ligand>
        <name>NAD(+)</name>
        <dbReference type="ChEBI" id="CHEBI:57540"/>
    </ligand>
</feature>
<feature type="binding site" evidence="1">
    <location>
        <position position="15"/>
    </location>
    <ligand>
        <name>NADP(+)</name>
        <dbReference type="ChEBI" id="CHEBI:58349"/>
    </ligand>
</feature>
<feature type="binding site" evidence="2">
    <location>
        <position position="15"/>
    </location>
    <ligand>
        <name>NADPH</name>
        <dbReference type="ChEBI" id="CHEBI:57783"/>
    </ligand>
</feature>
<feature type="binding site" evidence="2">
    <location>
        <position position="59"/>
    </location>
    <ligand>
        <name>NADPH</name>
        <dbReference type="ChEBI" id="CHEBI:57783"/>
    </ligand>
</feature>
<feature type="binding site" evidence="3">
    <location>
        <position position="95"/>
    </location>
    <ligand>
        <name>NAD(+)</name>
        <dbReference type="ChEBI" id="CHEBI:57540"/>
    </ligand>
</feature>
<feature type="binding site" evidence="1">
    <location>
        <position position="95"/>
    </location>
    <ligand>
        <name>NADP(+)</name>
        <dbReference type="ChEBI" id="CHEBI:58349"/>
    </ligand>
</feature>
<feature type="binding site" evidence="2">
    <location>
        <position position="95"/>
    </location>
    <ligand>
        <name>NADPH</name>
        <dbReference type="ChEBI" id="CHEBI:57783"/>
    </ligand>
</feature>
<feature type="binding site" evidence="2">
    <location>
        <position position="96"/>
    </location>
    <ligand>
        <name>NADPH</name>
        <dbReference type="ChEBI" id="CHEBI:57783"/>
    </ligand>
</feature>
<feature type="binding site" evidence="1">
    <location>
        <position position="119"/>
    </location>
    <ligand>
        <name>NADP(+)</name>
        <dbReference type="ChEBI" id="CHEBI:58349"/>
    </ligand>
</feature>
<feature type="binding site" evidence="2">
    <location>
        <position position="119"/>
    </location>
    <ligand>
        <name>NADPH</name>
        <dbReference type="ChEBI" id="CHEBI:57783"/>
    </ligand>
</feature>
<feature type="binding site" evidence="3">
    <location>
        <position position="146"/>
    </location>
    <ligand>
        <name>Na(+)</name>
        <dbReference type="ChEBI" id="CHEBI:29101"/>
    </ligand>
</feature>
<feature type="binding site" evidence="3">
    <location>
        <position position="149"/>
    </location>
    <ligand>
        <name>Na(+)</name>
        <dbReference type="ChEBI" id="CHEBI:29101"/>
    </ligand>
</feature>
<feature type="binding site" evidence="3">
    <location>
        <position position="151"/>
    </location>
    <ligand>
        <name>Na(+)</name>
        <dbReference type="ChEBI" id="CHEBI:29101"/>
    </ligand>
</feature>
<feature type="binding site" evidence="3">
    <location>
        <position position="153"/>
    </location>
    <ligand>
        <name>Na(+)</name>
        <dbReference type="ChEBI" id="CHEBI:29101"/>
    </ligand>
</feature>
<feature type="binding site" evidence="1">
    <location>
        <position position="209"/>
    </location>
    <ligand>
        <name>NADP(+)</name>
        <dbReference type="ChEBI" id="CHEBI:58349"/>
    </ligand>
</feature>
<feature type="binding site" evidence="3">
    <location>
        <position position="212"/>
    </location>
    <ligand>
        <name>L-homoserine</name>
        <dbReference type="ChEBI" id="CHEBI:57476"/>
    </ligand>
</feature>
<feature type="binding site" evidence="1">
    <location>
        <position position="212"/>
    </location>
    <ligand>
        <name>NADP(+)</name>
        <dbReference type="ChEBI" id="CHEBI:58349"/>
    </ligand>
</feature>
<feature type="binding site" evidence="3">
    <location>
        <position position="223"/>
    </location>
    <ligand>
        <name>L-homoserine</name>
        <dbReference type="ChEBI" id="CHEBI:57476"/>
    </ligand>
</feature>
<feature type="binding site" evidence="3">
    <location>
        <position position="349"/>
    </location>
    <ligand>
        <name>NAD(+)</name>
        <dbReference type="ChEBI" id="CHEBI:57540"/>
    </ligand>
</feature>
<feature type="binding site" evidence="1">
    <location>
        <position position="349"/>
    </location>
    <ligand>
        <name>NADP(+)</name>
        <dbReference type="ChEBI" id="CHEBI:58349"/>
    </ligand>
</feature>
<feature type="binding site" evidence="2">
    <location>
        <position position="349"/>
    </location>
    <ligand>
        <name>NADPH</name>
        <dbReference type="ChEBI" id="CHEBI:57783"/>
    </ligand>
</feature>
<keyword id="KW-0028">Amino-acid biosynthesis</keyword>
<keyword id="KW-0479">Metal-binding</keyword>
<keyword id="KW-0486">Methionine biosynthesis</keyword>
<keyword id="KW-0520">NAD</keyword>
<keyword id="KW-0521">NADP</keyword>
<keyword id="KW-0560">Oxidoreductase</keyword>
<keyword id="KW-1185">Reference proteome</keyword>
<keyword id="KW-0915">Sodium</keyword>
<keyword id="KW-0346">Stress response</keyword>
<keyword id="KW-0791">Threonine biosynthesis</keyword>
<accession>Q5B998</accession>
<accession>C8VJA1</accession>
<evidence type="ECO:0000250" key="1">
    <source>
        <dbReference type="UniProtKB" id="F9VNG5"/>
    </source>
</evidence>
<evidence type="ECO:0000250" key="2">
    <source>
        <dbReference type="UniProtKB" id="O58802"/>
    </source>
</evidence>
<evidence type="ECO:0000250" key="3">
    <source>
        <dbReference type="UniProtKB" id="P31116"/>
    </source>
</evidence>
<evidence type="ECO:0000255" key="4">
    <source>
        <dbReference type="PIRSR" id="PIRSR036497-1"/>
    </source>
</evidence>
<evidence type="ECO:0000269" key="5">
    <source>
    </source>
</evidence>
<evidence type="ECO:0000305" key="6"/>
<name>DHOM_EMENI</name>
<reference key="1">
    <citation type="journal article" date="2005" name="Nature">
        <title>Sequencing of Aspergillus nidulans and comparative analysis with A. fumigatus and A. oryzae.</title>
        <authorList>
            <person name="Galagan J.E."/>
            <person name="Calvo S.E."/>
            <person name="Cuomo C."/>
            <person name="Ma L.-J."/>
            <person name="Wortman J.R."/>
            <person name="Batzoglou S."/>
            <person name="Lee S.-I."/>
            <person name="Bastuerkmen M."/>
            <person name="Spevak C.C."/>
            <person name="Clutterbuck J."/>
            <person name="Kapitonov V."/>
            <person name="Jurka J."/>
            <person name="Scazzocchio C."/>
            <person name="Farman M.L."/>
            <person name="Butler J."/>
            <person name="Purcell S."/>
            <person name="Harris S."/>
            <person name="Braus G.H."/>
            <person name="Draht O."/>
            <person name="Busch S."/>
            <person name="D'Enfert C."/>
            <person name="Bouchier C."/>
            <person name="Goldman G.H."/>
            <person name="Bell-Pedersen D."/>
            <person name="Griffiths-Jones S."/>
            <person name="Doonan J.H."/>
            <person name="Yu J."/>
            <person name="Vienken K."/>
            <person name="Pain A."/>
            <person name="Freitag M."/>
            <person name="Selker E.U."/>
            <person name="Archer D.B."/>
            <person name="Penalva M.A."/>
            <person name="Oakley B.R."/>
            <person name="Momany M."/>
            <person name="Tanaka T."/>
            <person name="Kumagai T."/>
            <person name="Asai K."/>
            <person name="Machida M."/>
            <person name="Nierman W.C."/>
            <person name="Denning D.W."/>
            <person name="Caddick M.X."/>
            <person name="Hynes M."/>
            <person name="Paoletti M."/>
            <person name="Fischer R."/>
            <person name="Miller B.L."/>
            <person name="Dyer P.S."/>
            <person name="Sachs M.S."/>
            <person name="Osmani S.A."/>
            <person name="Birren B.W."/>
        </authorList>
    </citation>
    <scope>NUCLEOTIDE SEQUENCE [LARGE SCALE GENOMIC DNA]</scope>
    <source>
        <strain>FGSC A4 / ATCC 38163 / CBS 112.46 / NRRL 194 / M139</strain>
    </source>
</reference>
<reference key="2">
    <citation type="journal article" date="2009" name="Fungal Genet. Biol.">
        <title>The 2008 update of the Aspergillus nidulans genome annotation: a community effort.</title>
        <authorList>
            <person name="Wortman J.R."/>
            <person name="Gilsenan J.M."/>
            <person name="Joardar V."/>
            <person name="Deegan J."/>
            <person name="Clutterbuck J."/>
            <person name="Andersen M.R."/>
            <person name="Archer D."/>
            <person name="Bencina M."/>
            <person name="Braus G."/>
            <person name="Coutinho P."/>
            <person name="von Dohren H."/>
            <person name="Doonan J."/>
            <person name="Driessen A.J."/>
            <person name="Durek P."/>
            <person name="Espeso E."/>
            <person name="Fekete E."/>
            <person name="Flipphi M."/>
            <person name="Estrada C.G."/>
            <person name="Geysens S."/>
            <person name="Goldman G."/>
            <person name="de Groot P.W."/>
            <person name="Hansen K."/>
            <person name="Harris S.D."/>
            <person name="Heinekamp T."/>
            <person name="Helmstaedt K."/>
            <person name="Henrissat B."/>
            <person name="Hofmann G."/>
            <person name="Homan T."/>
            <person name="Horio T."/>
            <person name="Horiuchi H."/>
            <person name="James S."/>
            <person name="Jones M."/>
            <person name="Karaffa L."/>
            <person name="Karanyi Z."/>
            <person name="Kato M."/>
            <person name="Keller N."/>
            <person name="Kelly D.E."/>
            <person name="Kiel J.A."/>
            <person name="Kim J.M."/>
            <person name="van der Klei I.J."/>
            <person name="Klis F.M."/>
            <person name="Kovalchuk A."/>
            <person name="Krasevec N."/>
            <person name="Kubicek C.P."/>
            <person name="Liu B."/>
            <person name="Maccabe A."/>
            <person name="Meyer V."/>
            <person name="Mirabito P."/>
            <person name="Miskei M."/>
            <person name="Mos M."/>
            <person name="Mullins J."/>
            <person name="Nelson D.R."/>
            <person name="Nielsen J."/>
            <person name="Oakley B.R."/>
            <person name="Osmani S.A."/>
            <person name="Pakula T."/>
            <person name="Paszewski A."/>
            <person name="Paulsen I."/>
            <person name="Pilsyk S."/>
            <person name="Pocsi I."/>
            <person name="Punt P.J."/>
            <person name="Ram A.F."/>
            <person name="Ren Q."/>
            <person name="Robellet X."/>
            <person name="Robson G."/>
            <person name="Seiboth B."/>
            <person name="van Solingen P."/>
            <person name="Specht T."/>
            <person name="Sun J."/>
            <person name="Taheri-Talesh N."/>
            <person name="Takeshita N."/>
            <person name="Ussery D."/>
            <person name="vanKuyk P.A."/>
            <person name="Visser H."/>
            <person name="van de Vondervoort P.J."/>
            <person name="de Vries R.P."/>
            <person name="Walton J."/>
            <person name="Xiang X."/>
            <person name="Xiong Y."/>
            <person name="Zeng A.P."/>
            <person name="Brandt B.W."/>
            <person name="Cornell M.J."/>
            <person name="van den Hondel C.A."/>
            <person name="Visser J."/>
            <person name="Oliver S.G."/>
            <person name="Turner G."/>
        </authorList>
    </citation>
    <scope>GENOME REANNOTATION</scope>
    <source>
        <strain>FGSC A4 / ATCC 38163 / CBS 112.46 / NRRL 194 / M139</strain>
    </source>
</reference>
<reference key="3">
    <citation type="journal article" date="2007" name="Fungal Genet. Biol.">
        <title>Proteome map of Aspergillus nidulans during osmoadaptation.</title>
        <authorList>
            <person name="Kim Y."/>
            <person name="Nandakumar M.P."/>
            <person name="Marten M.R."/>
        </authorList>
    </citation>
    <scope>INDUCTION</scope>
    <scope>IDENTIFICATION BY MASS SPECTROMETRY</scope>
</reference>